<dbReference type="EMBL" id="Y11565">
    <property type="protein sequence ID" value="CAA72324.1"/>
    <property type="status" value="ALT_FRAME"/>
    <property type="molecule type" value="Genomic_DNA"/>
</dbReference>
<dbReference type="EMBL" id="AL670542">
    <property type="protein sequence ID" value="CAD21506.1"/>
    <property type="molecule type" value="Genomic_DNA"/>
</dbReference>
<dbReference type="EMBL" id="CM002240">
    <property type="protein sequence ID" value="EAA31465.3"/>
    <property type="molecule type" value="Genomic_DNA"/>
</dbReference>
<dbReference type="PIR" id="T46651">
    <property type="entry name" value="T46651"/>
</dbReference>
<dbReference type="RefSeq" id="XP_960701.3">
    <property type="nucleotide sequence ID" value="XM_955608.3"/>
</dbReference>
<dbReference type="SMR" id="P87000"/>
<dbReference type="STRING" id="367110.P87000"/>
<dbReference type="PaxDb" id="5141-EFNCRP00000006695"/>
<dbReference type="EnsemblFungi" id="EAA31465">
    <property type="protein sequence ID" value="EAA31465"/>
    <property type="gene ID" value="NCU06656"/>
</dbReference>
<dbReference type="GeneID" id="3876849"/>
<dbReference type="KEGG" id="ncr:NCU06656"/>
<dbReference type="VEuPathDB" id="FungiDB:NCU06656"/>
<dbReference type="HOGENOM" id="CLU_007124_0_0_1"/>
<dbReference type="InParanoid" id="P87000"/>
<dbReference type="OrthoDB" id="1924787at2759"/>
<dbReference type="Proteomes" id="UP000001805">
    <property type="component" value="Chromosome 2, Linkage Group V"/>
</dbReference>
<dbReference type="GO" id="GO:0005634">
    <property type="term" value="C:nucleus"/>
    <property type="evidence" value="ECO:0000318"/>
    <property type="project" value="GO_Central"/>
</dbReference>
<dbReference type="GO" id="GO:0000981">
    <property type="term" value="F:DNA-binding transcription factor activity, RNA polymerase II-specific"/>
    <property type="evidence" value="ECO:0000318"/>
    <property type="project" value="GO_Central"/>
</dbReference>
<dbReference type="GO" id="GO:0043565">
    <property type="term" value="F:sequence-specific DNA binding"/>
    <property type="evidence" value="ECO:0000318"/>
    <property type="project" value="GO_Central"/>
</dbReference>
<dbReference type="GO" id="GO:0008270">
    <property type="term" value="F:zinc ion binding"/>
    <property type="evidence" value="ECO:0007669"/>
    <property type="project" value="InterPro"/>
</dbReference>
<dbReference type="GO" id="GO:0006351">
    <property type="term" value="P:DNA-templated transcription"/>
    <property type="evidence" value="ECO:0007669"/>
    <property type="project" value="InterPro"/>
</dbReference>
<dbReference type="GO" id="GO:0045944">
    <property type="term" value="P:positive regulation of transcription by RNA polymerase II"/>
    <property type="evidence" value="ECO:0000318"/>
    <property type="project" value="GO_Central"/>
</dbReference>
<dbReference type="CDD" id="cd12148">
    <property type="entry name" value="fungal_TF_MHR"/>
    <property type="match status" value="1"/>
</dbReference>
<dbReference type="CDD" id="cd00067">
    <property type="entry name" value="GAL4"/>
    <property type="match status" value="1"/>
</dbReference>
<dbReference type="CDD" id="cd15485">
    <property type="entry name" value="ZIP_Cat8"/>
    <property type="match status" value="1"/>
</dbReference>
<dbReference type="FunFam" id="4.10.240.10:FF:000007">
    <property type="entry name" value="C6 transcription factor FacB"/>
    <property type="match status" value="1"/>
</dbReference>
<dbReference type="Gene3D" id="4.10.240.10">
    <property type="entry name" value="Zn(2)-C6 fungal-type DNA-binding domain"/>
    <property type="match status" value="1"/>
</dbReference>
<dbReference type="InterPro" id="IPR050987">
    <property type="entry name" value="AtrR-like"/>
</dbReference>
<dbReference type="InterPro" id="IPR007219">
    <property type="entry name" value="Transcription_factor_dom_fun"/>
</dbReference>
<dbReference type="InterPro" id="IPR036864">
    <property type="entry name" value="Zn2-C6_fun-type_DNA-bd_sf"/>
</dbReference>
<dbReference type="InterPro" id="IPR001138">
    <property type="entry name" value="Zn2Cys6_DnaBD"/>
</dbReference>
<dbReference type="PANTHER" id="PTHR46910:SF12">
    <property type="entry name" value="REGULATORY PROTEIN CAT8"/>
    <property type="match status" value="1"/>
</dbReference>
<dbReference type="PANTHER" id="PTHR46910">
    <property type="entry name" value="TRANSCRIPTION FACTOR PDR1"/>
    <property type="match status" value="1"/>
</dbReference>
<dbReference type="Pfam" id="PF04082">
    <property type="entry name" value="Fungal_trans"/>
    <property type="match status" value="1"/>
</dbReference>
<dbReference type="Pfam" id="PF00172">
    <property type="entry name" value="Zn_clus"/>
    <property type="match status" value="1"/>
</dbReference>
<dbReference type="SMART" id="SM00906">
    <property type="entry name" value="Fungal_trans"/>
    <property type="match status" value="1"/>
</dbReference>
<dbReference type="SMART" id="SM00066">
    <property type="entry name" value="GAL4"/>
    <property type="match status" value="1"/>
</dbReference>
<dbReference type="SUPFAM" id="SSF57701">
    <property type="entry name" value="Zn2/Cys6 DNA-binding domain"/>
    <property type="match status" value="1"/>
</dbReference>
<dbReference type="PROSITE" id="PS00463">
    <property type="entry name" value="ZN2_CY6_FUNGAL_1"/>
    <property type="match status" value="1"/>
</dbReference>
<dbReference type="PROSITE" id="PS50048">
    <property type="entry name" value="ZN2_CY6_FUNGAL_2"/>
    <property type="match status" value="1"/>
</dbReference>
<keyword id="KW-0010">Activator</keyword>
<keyword id="KW-0903">Direct protein sequencing</keyword>
<keyword id="KW-0238">DNA-binding</keyword>
<keyword id="KW-0479">Metal-binding</keyword>
<keyword id="KW-0539">Nucleus</keyword>
<keyword id="KW-1185">Reference proteome</keyword>
<keyword id="KW-0804">Transcription</keyword>
<keyword id="KW-0805">Transcription regulation</keyword>
<keyword id="KW-0862">Zinc</keyword>
<name>ACU15_NEUCR</name>
<sequence length="926" mass="102763">MPGILPMKVIKVGNSSQSRIAQACDRCRSKKIRCDGIRPCCSQCANVGFECKTSDKLSRRAFPRGYTESLEERVRALEAEIRELKDLLDEKDEKLDMLSKMHSNRSRSAEPPRSTPAAEIKRDSGTPAKEDTFRVQASPLLLGVENSDSYFMGASSGRSFIETFKRKIQENGKSCTDFNPEAFLHIQGCYPLSTKLAPQSMRIPPRLFSDRCVNVYFQEWAPLFPVLHKPAFLRVYEEFVADPEKIKNNHKLTQLYLVFSIAGLSSEQPDFQQLAACETQWHKSLEAVLMDNTMLTLQCLILALMYCTVRADYKRLQYYKGIAVGLSHRLGLHQSQKRFSFGALTIETRKKVFWTLYTLDCFSAAILGLPKLLKDEDVHAEFPSDTDDENVTEKGFQPSLPGEPTRISSALALFRGSRILGKVLEKIYPAATSYELSLQQMSSLEGELTEWFENLPQHLKLNFKQDKPSTDVTGSRSPLLALAYYYTRILIYRPAIASSLGPKAAPALMSVAESSKSIVQIVQLLEERSMSFSFCLNKADILIVCGMALLYQTLGLKHDSKVLKDNEKLVNSVVKIVTKVNAPGSYDFKRIAGMLVTVEESLPQSLPTPPRQSPEACMPTPPAQQGSPSPSAVDRGAQPNLARQSSASLSETDLIVQRDKLLGMAVTPQHQQYQHQQLQQQHKNELSRARSQTSFDNLRQKAQQMRPHHRHSLSHAQVAQAALMGRTSTGTQSTPNLDYLSLSSPQSPVSPVQMRSQPHQLQQQQQQQPQPQQQQQQHQRSSIASSHSQQGQMFPQKTSTGMSTAEWEALVRSLDGGPVSLYTAIYGGPALAPLETPSSATQSSATAWGQDPWDMSSFNLGDFVPGAPTAQSVLSLSEESISSCDDVPSSDMGLNNGNMDYRNTLLPVTSAGTNNFLLDGLHGYGL</sequence>
<reference key="1">
    <citation type="journal article" date="2002" name="Mol. Genet. Genomics">
        <title>A regulator gene for acetate utilisation from Neurospora crassa.</title>
        <authorList>
            <person name="Bibbins M."/>
            <person name="Crepin V.F."/>
            <person name="Cummings N.J."/>
            <person name="Mizote T."/>
            <person name="Baker K."/>
            <person name="Mellits K.H."/>
            <person name="Connerton I.F."/>
        </authorList>
    </citation>
    <scope>NUCLEOTIDE SEQUENCE [GENOMIC DNA]</scope>
    <scope>PARTIAL PROTEIN SEQUENCE</scope>
    <source>
        <strain>74A / STA</strain>
    </source>
</reference>
<reference key="2">
    <citation type="journal article" date="2003" name="Nucleic Acids Res.">
        <title>What's in the genome of a filamentous fungus? Analysis of the Neurospora genome sequence.</title>
        <authorList>
            <person name="Mannhaupt G."/>
            <person name="Montrone C."/>
            <person name="Haase D."/>
            <person name="Mewes H.-W."/>
            <person name="Aign V."/>
            <person name="Hoheisel J.D."/>
            <person name="Fartmann B."/>
            <person name="Nyakatura G."/>
            <person name="Kempken F."/>
            <person name="Maier J."/>
            <person name="Schulte U."/>
        </authorList>
    </citation>
    <scope>NUCLEOTIDE SEQUENCE [LARGE SCALE GENOMIC DNA]</scope>
    <source>
        <strain>ATCC 24698 / 74-OR23-1A / CBS 708.71 / DSM 1257 / FGSC 987</strain>
    </source>
</reference>
<reference key="3">
    <citation type="journal article" date="2003" name="Nature">
        <title>The genome sequence of the filamentous fungus Neurospora crassa.</title>
        <authorList>
            <person name="Galagan J.E."/>
            <person name="Calvo S.E."/>
            <person name="Borkovich K.A."/>
            <person name="Selker E.U."/>
            <person name="Read N.D."/>
            <person name="Jaffe D.B."/>
            <person name="FitzHugh W."/>
            <person name="Ma L.-J."/>
            <person name="Smirnov S."/>
            <person name="Purcell S."/>
            <person name="Rehman B."/>
            <person name="Elkins T."/>
            <person name="Engels R."/>
            <person name="Wang S."/>
            <person name="Nielsen C.B."/>
            <person name="Butler J."/>
            <person name="Endrizzi M."/>
            <person name="Qui D."/>
            <person name="Ianakiev P."/>
            <person name="Bell-Pedersen D."/>
            <person name="Nelson M.A."/>
            <person name="Werner-Washburne M."/>
            <person name="Selitrennikoff C.P."/>
            <person name="Kinsey J.A."/>
            <person name="Braun E.L."/>
            <person name="Zelter A."/>
            <person name="Schulte U."/>
            <person name="Kothe G.O."/>
            <person name="Jedd G."/>
            <person name="Mewes H.-W."/>
            <person name="Staben C."/>
            <person name="Marcotte E."/>
            <person name="Greenberg D."/>
            <person name="Roy A."/>
            <person name="Foley K."/>
            <person name="Naylor J."/>
            <person name="Stange-Thomann N."/>
            <person name="Barrett R."/>
            <person name="Gnerre S."/>
            <person name="Kamal M."/>
            <person name="Kamvysselis M."/>
            <person name="Mauceli E.W."/>
            <person name="Bielke C."/>
            <person name="Rudd S."/>
            <person name="Frishman D."/>
            <person name="Krystofova S."/>
            <person name="Rasmussen C."/>
            <person name="Metzenberg R.L."/>
            <person name="Perkins D.D."/>
            <person name="Kroken S."/>
            <person name="Cogoni C."/>
            <person name="Macino G."/>
            <person name="Catcheside D.E.A."/>
            <person name="Li W."/>
            <person name="Pratt R.J."/>
            <person name="Osmani S.A."/>
            <person name="DeSouza C.P.C."/>
            <person name="Glass N.L."/>
            <person name="Orbach M.J."/>
            <person name="Berglund J.A."/>
            <person name="Voelker R."/>
            <person name="Yarden O."/>
            <person name="Plamann M."/>
            <person name="Seiler S."/>
            <person name="Dunlap J.C."/>
            <person name="Radford A."/>
            <person name="Aramayo R."/>
            <person name="Natvig D.O."/>
            <person name="Alex L.A."/>
            <person name="Mannhaupt G."/>
            <person name="Ebbole D.J."/>
            <person name="Freitag M."/>
            <person name="Paulsen I."/>
            <person name="Sachs M.S."/>
            <person name="Lander E.S."/>
            <person name="Nusbaum C."/>
            <person name="Birren B.W."/>
        </authorList>
    </citation>
    <scope>NUCLEOTIDE SEQUENCE [LARGE SCALE GENOMIC DNA]</scope>
    <source>
        <strain>ATCC 24698 / 74-OR23-1A / CBS 708.71 / DSM 1257 / FGSC 987</strain>
    </source>
</reference>
<protein>
    <recommendedName>
        <fullName>Transcriptional activator protein acu-15</fullName>
    </recommendedName>
    <alternativeName>
        <fullName>Acetate utilization protein 15</fullName>
    </alternativeName>
</protein>
<evidence type="ECO:0000255" key="1">
    <source>
        <dbReference type="PROSITE-ProRule" id="PRU00227"/>
    </source>
</evidence>
<evidence type="ECO:0000256" key="2">
    <source>
        <dbReference type="SAM" id="MobiDB-lite"/>
    </source>
</evidence>
<evidence type="ECO:0000305" key="3"/>
<organism>
    <name type="scientific">Neurospora crassa (strain ATCC 24698 / 74-OR23-1A / CBS 708.71 / DSM 1257 / FGSC 987)</name>
    <dbReference type="NCBI Taxonomy" id="367110"/>
    <lineage>
        <taxon>Eukaryota</taxon>
        <taxon>Fungi</taxon>
        <taxon>Dikarya</taxon>
        <taxon>Ascomycota</taxon>
        <taxon>Pezizomycotina</taxon>
        <taxon>Sordariomycetes</taxon>
        <taxon>Sordariomycetidae</taxon>
        <taxon>Sordariales</taxon>
        <taxon>Sordariaceae</taxon>
        <taxon>Neurospora</taxon>
    </lineage>
</organism>
<comment type="function">
    <text>Positive regulator of acetate induction.</text>
</comment>
<comment type="subcellular location">
    <subcellularLocation>
        <location>Nucleus</location>
    </subcellularLocation>
</comment>
<comment type="domain">
    <text>The glutamine-rich domain might function in activating gene expression.</text>
</comment>
<comment type="sequence caution" evidence="3">
    <conflict type="frameshift">
        <sequence resource="EMBL-CDS" id="CAA72324"/>
    </conflict>
</comment>
<accession>P87000</accession>
<accession>Q7S7A7</accession>
<accession>Q8X0T9</accession>
<proteinExistence type="evidence at protein level"/>
<gene>
    <name type="primary">acu-15</name>
    <name type="ORF">18A7.170</name>
    <name type="ORF">NCU06656</name>
</gene>
<feature type="chain" id="PRO_0000114928" description="Transcriptional activator protein acu-15">
    <location>
        <begin position="1"/>
        <end position="926"/>
    </location>
</feature>
<feature type="DNA-binding region" description="Zn(2)-C6 fungal-type" evidence="1">
    <location>
        <begin position="24"/>
        <end position="51"/>
    </location>
</feature>
<feature type="region of interest" description="Disordered" evidence="2">
    <location>
        <begin position="100"/>
        <end position="129"/>
    </location>
</feature>
<feature type="region of interest" description="Disordered" evidence="2">
    <location>
        <begin position="602"/>
        <end position="649"/>
    </location>
</feature>
<feature type="region of interest" description="Disordered" evidence="2">
    <location>
        <begin position="667"/>
        <end position="801"/>
    </location>
</feature>
<feature type="compositionally biased region" description="Basic and acidic residues" evidence="2">
    <location>
        <begin position="119"/>
        <end position="129"/>
    </location>
</feature>
<feature type="compositionally biased region" description="Low complexity" evidence="2">
    <location>
        <begin position="623"/>
        <end position="632"/>
    </location>
</feature>
<feature type="compositionally biased region" description="Low complexity" evidence="2">
    <location>
        <begin position="669"/>
        <end position="681"/>
    </location>
</feature>
<feature type="compositionally biased region" description="Polar residues" evidence="2">
    <location>
        <begin position="689"/>
        <end position="703"/>
    </location>
</feature>
<feature type="compositionally biased region" description="Polar residues" evidence="2">
    <location>
        <begin position="726"/>
        <end position="736"/>
    </location>
</feature>
<feature type="compositionally biased region" description="Low complexity" evidence="2">
    <location>
        <begin position="740"/>
        <end position="792"/>
    </location>
</feature>
<feature type="sequence conflict" description="In Ref. 1; CAA72324." evidence="3" ref="1">
    <location>
        <begin position="141"/>
        <end position="152"/>
    </location>
</feature>
<feature type="sequence conflict" description="In Ref. 1; CAA72324." evidence="3" ref="1">
    <original>S</original>
    <variation>K</variation>
    <location>
        <position position="156"/>
    </location>
</feature>
<feature type="sequence conflict" description="In Ref. 1; CAA72324." evidence="3" ref="1">
    <original>FS</original>
    <variation>SP</variation>
    <location>
        <begin position="208"/>
        <end position="209"/>
    </location>
</feature>
<feature type="sequence conflict" description="In Ref. 1; CAA72324." evidence="3" ref="1">
    <original>Q</original>
    <variation>H</variation>
    <location>
        <position position="439"/>
    </location>
</feature>
<feature type="sequence conflict" description="In Ref. 1; CAA72324." evidence="3" ref="1">
    <original>S</original>
    <variation>P</variation>
    <location>
        <position position="498"/>
    </location>
</feature>
<feature type="sequence conflict" description="In Ref. 1; CAA72324." evidence="3" ref="1">
    <original>S</original>
    <variation>N</variation>
    <location>
        <position position="872"/>
    </location>
</feature>